<comment type="function">
    <text evidence="1">Prevents the cell division inhibition by proteins MinC and MinD at internal division sites while permitting inhibition at polar sites. This ensures cell division at the proper site by restricting the formation of a division septum at the midpoint of the long axis of the cell.</text>
</comment>
<comment type="similarity">
    <text evidence="1">Belongs to the MinE family.</text>
</comment>
<name>MINE_NAUPA</name>
<dbReference type="EMBL" id="CP001279">
    <property type="protein sequence ID" value="ACM93167.1"/>
    <property type="molecule type" value="Genomic_DNA"/>
</dbReference>
<dbReference type="RefSeq" id="WP_015902219.1">
    <property type="nucleotide sequence ID" value="NC_012115.1"/>
</dbReference>
<dbReference type="SMR" id="B9LA90"/>
<dbReference type="STRING" id="598659.NAMH_1152"/>
<dbReference type="KEGG" id="nam:NAMH_1152"/>
<dbReference type="eggNOG" id="COG0851">
    <property type="taxonomic scope" value="Bacteria"/>
</dbReference>
<dbReference type="HOGENOM" id="CLU_137929_2_1_7"/>
<dbReference type="OrthoDB" id="9802655at2"/>
<dbReference type="Proteomes" id="UP000000448">
    <property type="component" value="Chromosome"/>
</dbReference>
<dbReference type="GO" id="GO:0051301">
    <property type="term" value="P:cell division"/>
    <property type="evidence" value="ECO:0007669"/>
    <property type="project" value="UniProtKB-KW"/>
</dbReference>
<dbReference type="GO" id="GO:0032955">
    <property type="term" value="P:regulation of division septum assembly"/>
    <property type="evidence" value="ECO:0007669"/>
    <property type="project" value="InterPro"/>
</dbReference>
<dbReference type="Gene3D" id="3.30.1070.10">
    <property type="entry name" value="Cell division topological specificity factor MinE"/>
    <property type="match status" value="1"/>
</dbReference>
<dbReference type="HAMAP" id="MF_00262">
    <property type="entry name" value="MinE"/>
    <property type="match status" value="1"/>
</dbReference>
<dbReference type="InterPro" id="IPR005527">
    <property type="entry name" value="MinE"/>
</dbReference>
<dbReference type="InterPro" id="IPR036707">
    <property type="entry name" value="MinE_sf"/>
</dbReference>
<dbReference type="NCBIfam" id="TIGR01215">
    <property type="entry name" value="minE"/>
    <property type="match status" value="1"/>
</dbReference>
<dbReference type="NCBIfam" id="NF001422">
    <property type="entry name" value="PRK00296.1"/>
    <property type="match status" value="1"/>
</dbReference>
<dbReference type="Pfam" id="PF03776">
    <property type="entry name" value="MinE"/>
    <property type="match status" value="1"/>
</dbReference>
<dbReference type="SUPFAM" id="SSF55229">
    <property type="entry name" value="Cell division protein MinE topological specificity domain"/>
    <property type="match status" value="1"/>
</dbReference>
<sequence length="77" mass="9136">MSFFDIFKKKKSKDVAKDRLMMMLAYERANTKIENLDEMKKDLINVVKKYLNVKDVHIKSNSNQDIETLEVEIILNK</sequence>
<feature type="chain" id="PRO_1000191291" description="Cell division topological specificity factor">
    <location>
        <begin position="1"/>
        <end position="77"/>
    </location>
</feature>
<accession>B9LA90</accession>
<organism>
    <name type="scientific">Nautilia profundicola (strain ATCC BAA-1463 / DSM 18972 / AmH)</name>
    <dbReference type="NCBI Taxonomy" id="598659"/>
    <lineage>
        <taxon>Bacteria</taxon>
        <taxon>Pseudomonadati</taxon>
        <taxon>Campylobacterota</taxon>
        <taxon>Epsilonproteobacteria</taxon>
        <taxon>Nautiliales</taxon>
        <taxon>Nautiliaceae</taxon>
        <taxon>Nautilia</taxon>
    </lineage>
</organism>
<gene>
    <name evidence="1" type="primary">minE</name>
    <name type="ordered locus">NAMH_1152</name>
</gene>
<reference key="1">
    <citation type="journal article" date="2009" name="PLoS Genet.">
        <title>Adaptations to submarine hydrothermal environments exemplified by the genome of Nautilia profundicola.</title>
        <authorList>
            <person name="Campbell B.J."/>
            <person name="Smith J.L."/>
            <person name="Hanson T.E."/>
            <person name="Klotz M.G."/>
            <person name="Stein L.Y."/>
            <person name="Lee C.K."/>
            <person name="Wu D."/>
            <person name="Robinson J.M."/>
            <person name="Khouri H.M."/>
            <person name="Eisen J.A."/>
            <person name="Cary S.C."/>
        </authorList>
    </citation>
    <scope>NUCLEOTIDE SEQUENCE [LARGE SCALE GENOMIC DNA]</scope>
    <source>
        <strain>ATCC BAA-1463 / DSM 18972 / AmH</strain>
    </source>
</reference>
<evidence type="ECO:0000255" key="1">
    <source>
        <dbReference type="HAMAP-Rule" id="MF_00262"/>
    </source>
</evidence>
<protein>
    <recommendedName>
        <fullName evidence="1">Cell division topological specificity factor</fullName>
    </recommendedName>
</protein>
<proteinExistence type="inferred from homology"/>
<keyword id="KW-0131">Cell cycle</keyword>
<keyword id="KW-0132">Cell division</keyword>